<keyword id="KW-0028">Amino-acid biosynthesis</keyword>
<keyword id="KW-0067">ATP-binding</keyword>
<keyword id="KW-0418">Kinase</keyword>
<keyword id="KW-0457">Lysine biosynthesis</keyword>
<keyword id="KW-0479">Metal-binding</keyword>
<keyword id="KW-0486">Methionine biosynthesis</keyword>
<keyword id="KW-0511">Multifunctional enzyme</keyword>
<keyword id="KW-0520">NAD</keyword>
<keyword id="KW-0521">NADP</keyword>
<keyword id="KW-0547">Nucleotide-binding</keyword>
<keyword id="KW-0560">Oxidoreductase</keyword>
<keyword id="KW-1185">Reference proteome</keyword>
<keyword id="KW-0915">Sodium</keyword>
<keyword id="KW-0791">Threonine biosynthesis</keyword>
<keyword id="KW-0808">Transferase</keyword>
<evidence type="ECO:0000250" key="1"/>
<evidence type="ECO:0000250" key="2">
    <source>
        <dbReference type="UniProtKB" id="F9VNG5"/>
    </source>
</evidence>
<evidence type="ECO:0000250" key="3">
    <source>
        <dbReference type="UniProtKB" id="O58802"/>
    </source>
</evidence>
<evidence type="ECO:0000250" key="4">
    <source>
        <dbReference type="UniProtKB" id="P31116"/>
    </source>
</evidence>
<evidence type="ECO:0000250" key="5">
    <source>
        <dbReference type="UniProtKB" id="Q9SA18"/>
    </source>
</evidence>
<evidence type="ECO:0000255" key="6"/>
<evidence type="ECO:0000255" key="7">
    <source>
        <dbReference type="PROSITE-ProRule" id="PRU01007"/>
    </source>
</evidence>
<evidence type="ECO:0000305" key="8"/>
<organism>
    <name type="scientific">Buchnera aphidicola subsp. Acyrthosiphon pisum (strain APS)</name>
    <name type="common">Acyrthosiphon pisum symbiotic bacterium</name>
    <dbReference type="NCBI Taxonomy" id="107806"/>
    <lineage>
        <taxon>Bacteria</taxon>
        <taxon>Pseudomonadati</taxon>
        <taxon>Pseudomonadota</taxon>
        <taxon>Gammaproteobacteria</taxon>
        <taxon>Enterobacterales</taxon>
        <taxon>Erwiniaceae</taxon>
        <taxon>Buchnera</taxon>
    </lineage>
</organism>
<feature type="chain" id="PRO_0000066684" description="Bifunctional aspartokinase/homoserine dehydrogenase">
    <location>
        <begin position="1"/>
        <end position="816"/>
    </location>
</feature>
<feature type="domain" description="ACT" evidence="7">
    <location>
        <begin position="402"/>
        <end position="479"/>
    </location>
</feature>
<feature type="region of interest" description="Aspartokinase" evidence="1">
    <location>
        <begin position="1"/>
        <end position="250"/>
    </location>
</feature>
<feature type="region of interest" description="Interface" evidence="1">
    <location>
        <begin position="251"/>
        <end position="471"/>
    </location>
</feature>
<feature type="region of interest" description="Homoserine dehydrogenase" evidence="1">
    <location>
        <begin position="472"/>
        <end position="816"/>
    </location>
</feature>
<feature type="active site" description="Proton donor" evidence="6">
    <location>
        <position position="683"/>
    </location>
</feature>
<feature type="binding site" evidence="4">
    <location>
        <position position="476"/>
    </location>
    <ligand>
        <name>NAD(+)</name>
        <dbReference type="ChEBI" id="CHEBI:57540"/>
    </ligand>
</feature>
<feature type="binding site" evidence="4">
    <location>
        <position position="477"/>
    </location>
    <ligand>
        <name>NAD(+)</name>
        <dbReference type="ChEBI" id="CHEBI:57540"/>
    </ligand>
</feature>
<feature type="binding site" evidence="2">
    <location>
        <position position="477"/>
    </location>
    <ligand>
        <name>NADP(+)</name>
        <dbReference type="ChEBI" id="CHEBI:58349"/>
    </ligand>
</feature>
<feature type="binding site" evidence="3">
    <location>
        <position position="477"/>
    </location>
    <ligand>
        <name>NADPH</name>
        <dbReference type="ChEBI" id="CHEBI:57783"/>
    </ligand>
</feature>
<feature type="binding site" evidence="4">
    <location>
        <position position="505"/>
    </location>
    <ligand>
        <name>NAD(+)</name>
        <dbReference type="ChEBI" id="CHEBI:57540"/>
    </ligand>
</feature>
<feature type="binding site" evidence="2">
    <location>
        <position position="508"/>
    </location>
    <ligand>
        <name>NADP(+)</name>
        <dbReference type="ChEBI" id="CHEBI:58349"/>
    </ligand>
</feature>
<feature type="binding site" evidence="4">
    <location>
        <position position="556"/>
    </location>
    <ligand>
        <name>NAD(+)</name>
        <dbReference type="ChEBI" id="CHEBI:57540"/>
    </ligand>
</feature>
<feature type="binding site" evidence="2">
    <location>
        <position position="556"/>
    </location>
    <ligand>
        <name>NADP(+)</name>
        <dbReference type="ChEBI" id="CHEBI:58349"/>
    </ligand>
</feature>
<feature type="binding site" evidence="3">
    <location>
        <position position="556"/>
    </location>
    <ligand>
        <name>NADPH</name>
        <dbReference type="ChEBI" id="CHEBI:57783"/>
    </ligand>
</feature>
<feature type="binding site" evidence="3">
    <location>
        <position position="557"/>
    </location>
    <ligand>
        <name>NADPH</name>
        <dbReference type="ChEBI" id="CHEBI:57783"/>
    </ligand>
</feature>
<feature type="binding site" evidence="2">
    <location>
        <position position="578"/>
    </location>
    <ligand>
        <name>NADP(+)</name>
        <dbReference type="ChEBI" id="CHEBI:58349"/>
    </ligand>
</feature>
<feature type="binding site" evidence="3">
    <location>
        <position position="578"/>
    </location>
    <ligand>
        <name>NADPH</name>
        <dbReference type="ChEBI" id="CHEBI:57783"/>
    </ligand>
</feature>
<feature type="binding site" evidence="2">
    <location>
        <position position="580"/>
    </location>
    <ligand>
        <name>NADP(+)</name>
        <dbReference type="ChEBI" id="CHEBI:58349"/>
    </ligand>
</feature>
<feature type="binding site" evidence="3">
    <location>
        <position position="580"/>
    </location>
    <ligand>
        <name>NADPH</name>
        <dbReference type="ChEBI" id="CHEBI:57783"/>
    </ligand>
</feature>
<feature type="binding site" evidence="4">
    <location>
        <position position="607"/>
    </location>
    <ligand>
        <name>Na(+)</name>
        <dbReference type="ChEBI" id="CHEBI:29101"/>
    </ligand>
</feature>
<feature type="binding site" evidence="4">
    <location>
        <position position="610"/>
    </location>
    <ligand>
        <name>Na(+)</name>
        <dbReference type="ChEBI" id="CHEBI:29101"/>
    </ligand>
</feature>
<feature type="binding site" evidence="4">
    <location>
        <position position="612"/>
    </location>
    <ligand>
        <name>Na(+)</name>
        <dbReference type="ChEBI" id="CHEBI:29101"/>
    </ligand>
</feature>
<feature type="binding site" evidence="4">
    <location>
        <position position="614"/>
    </location>
    <ligand>
        <name>Na(+)</name>
        <dbReference type="ChEBI" id="CHEBI:29101"/>
    </ligand>
</feature>
<feature type="binding site" evidence="2">
    <location>
        <position position="665"/>
    </location>
    <ligand>
        <name>NADP(+)</name>
        <dbReference type="ChEBI" id="CHEBI:58349"/>
    </ligand>
</feature>
<feature type="binding site" evidence="4">
    <location>
        <position position="668"/>
    </location>
    <ligand>
        <name>L-homoserine</name>
        <dbReference type="ChEBI" id="CHEBI:57476"/>
    </ligand>
</feature>
<feature type="binding site" evidence="2">
    <location>
        <position position="668"/>
    </location>
    <ligand>
        <name>NADP(+)</name>
        <dbReference type="ChEBI" id="CHEBI:58349"/>
    </ligand>
</feature>
<feature type="binding site" evidence="4">
    <location>
        <position position="679"/>
    </location>
    <ligand>
        <name>L-homoserine</name>
        <dbReference type="ChEBI" id="CHEBI:57476"/>
    </ligand>
</feature>
<feature type="binding site" evidence="4">
    <location>
        <position position="799"/>
    </location>
    <ligand>
        <name>NAD(+)</name>
        <dbReference type="ChEBI" id="CHEBI:57540"/>
    </ligand>
</feature>
<feature type="binding site" evidence="2">
    <location>
        <position position="799"/>
    </location>
    <ligand>
        <name>NADP(+)</name>
        <dbReference type="ChEBI" id="CHEBI:58349"/>
    </ligand>
</feature>
<feature type="binding site" evidence="3">
    <location>
        <position position="799"/>
    </location>
    <ligand>
        <name>NADPH</name>
        <dbReference type="ChEBI" id="CHEBI:57783"/>
    </ligand>
</feature>
<protein>
    <recommendedName>
        <fullName>Bifunctional aspartokinase/homoserine dehydrogenase</fullName>
        <shortName>AK-HD</shortName>
    </recommendedName>
    <domain>
        <recommendedName>
            <fullName>Aspartokinase</fullName>
            <ecNumber>2.7.2.4</ecNumber>
        </recommendedName>
    </domain>
    <domain>
        <recommendedName>
            <fullName>Homoserine dehydrogenase</fullName>
            <ecNumber>1.1.1.3</ecNumber>
        </recommendedName>
    </domain>
</protein>
<name>AKH_BUCAI</name>
<proteinExistence type="inferred from homology"/>
<gene>
    <name type="primary">thrA</name>
    <name type="ordered locus">BU194</name>
</gene>
<dbReference type="EC" id="2.7.2.4"/>
<dbReference type="EC" id="1.1.1.3"/>
<dbReference type="EMBL" id="BA000003">
    <property type="protein sequence ID" value="BAB12911.1"/>
    <property type="molecule type" value="Genomic_DNA"/>
</dbReference>
<dbReference type="RefSeq" id="NP_240025.1">
    <property type="nucleotide sequence ID" value="NC_002528.1"/>
</dbReference>
<dbReference type="RefSeq" id="WP_010895993.1">
    <property type="nucleotide sequence ID" value="NC_002528.1"/>
</dbReference>
<dbReference type="SMR" id="P57290"/>
<dbReference type="STRING" id="563178.BUAP5A_191"/>
<dbReference type="EnsemblBacteria" id="BAB12911">
    <property type="protein sequence ID" value="BAB12911"/>
    <property type="gene ID" value="BAB12911"/>
</dbReference>
<dbReference type="KEGG" id="buc:BU194"/>
<dbReference type="PATRIC" id="fig|107806.10.peg.205"/>
<dbReference type="eggNOG" id="COG0460">
    <property type="taxonomic scope" value="Bacteria"/>
</dbReference>
<dbReference type="eggNOG" id="COG0527">
    <property type="taxonomic scope" value="Bacteria"/>
</dbReference>
<dbReference type="HOGENOM" id="CLU_009116_7_1_6"/>
<dbReference type="UniPathway" id="UPA00034">
    <property type="reaction ID" value="UER00015"/>
</dbReference>
<dbReference type="UniPathway" id="UPA00050">
    <property type="reaction ID" value="UER00063"/>
</dbReference>
<dbReference type="UniPathway" id="UPA00050">
    <property type="reaction ID" value="UER00461"/>
</dbReference>
<dbReference type="UniPathway" id="UPA00051">
    <property type="reaction ID" value="UER00462"/>
</dbReference>
<dbReference type="UniPathway" id="UPA00051">
    <property type="reaction ID" value="UER00465"/>
</dbReference>
<dbReference type="Proteomes" id="UP000001806">
    <property type="component" value="Chromosome"/>
</dbReference>
<dbReference type="GO" id="GO:0004072">
    <property type="term" value="F:aspartate kinase activity"/>
    <property type="evidence" value="ECO:0007669"/>
    <property type="project" value="UniProtKB-EC"/>
</dbReference>
<dbReference type="GO" id="GO:0005524">
    <property type="term" value="F:ATP binding"/>
    <property type="evidence" value="ECO:0007669"/>
    <property type="project" value="UniProtKB-KW"/>
</dbReference>
<dbReference type="GO" id="GO:0004412">
    <property type="term" value="F:homoserine dehydrogenase activity"/>
    <property type="evidence" value="ECO:0000250"/>
    <property type="project" value="UniProtKB"/>
</dbReference>
<dbReference type="GO" id="GO:0046872">
    <property type="term" value="F:metal ion binding"/>
    <property type="evidence" value="ECO:0007669"/>
    <property type="project" value="UniProtKB-KW"/>
</dbReference>
<dbReference type="GO" id="GO:0070403">
    <property type="term" value="F:NAD+ binding"/>
    <property type="evidence" value="ECO:0000250"/>
    <property type="project" value="UniProtKB"/>
</dbReference>
<dbReference type="GO" id="GO:0050661">
    <property type="term" value="F:NADP binding"/>
    <property type="evidence" value="ECO:0007669"/>
    <property type="project" value="InterPro"/>
</dbReference>
<dbReference type="GO" id="GO:0009090">
    <property type="term" value="P:homoserine biosynthetic process"/>
    <property type="evidence" value="ECO:0007669"/>
    <property type="project" value="TreeGrafter"/>
</dbReference>
<dbReference type="GO" id="GO:0009089">
    <property type="term" value="P:lysine biosynthetic process via diaminopimelate"/>
    <property type="evidence" value="ECO:0000250"/>
    <property type="project" value="UniProtKB"/>
</dbReference>
<dbReference type="GO" id="GO:0009086">
    <property type="term" value="P:methionine biosynthetic process"/>
    <property type="evidence" value="ECO:0000250"/>
    <property type="project" value="UniProtKB"/>
</dbReference>
<dbReference type="GO" id="GO:0009088">
    <property type="term" value="P:threonine biosynthetic process"/>
    <property type="evidence" value="ECO:0000250"/>
    <property type="project" value="UniProtKB"/>
</dbReference>
<dbReference type="CDD" id="cd04257">
    <property type="entry name" value="AAK_AK-HSDH"/>
    <property type="match status" value="1"/>
</dbReference>
<dbReference type="CDD" id="cd04892">
    <property type="entry name" value="ACT_AK-like_2"/>
    <property type="match status" value="1"/>
</dbReference>
<dbReference type="CDD" id="cd04921">
    <property type="entry name" value="ACT_AKi-HSDH-ThrA-like_1"/>
    <property type="match status" value="1"/>
</dbReference>
<dbReference type="FunFam" id="3.30.2130.10:FF:000001">
    <property type="entry name" value="Bifunctional aspartokinase/homoserine dehydrogenase"/>
    <property type="match status" value="1"/>
</dbReference>
<dbReference type="FunFam" id="3.30.360.10:FF:000006">
    <property type="entry name" value="Bifunctional aspartokinase/homoserine dehydrogenase"/>
    <property type="match status" value="1"/>
</dbReference>
<dbReference type="FunFam" id="3.40.50.720:FF:000083">
    <property type="entry name" value="Bifunctional aspartokinase/homoserine dehydrogenase"/>
    <property type="match status" value="1"/>
</dbReference>
<dbReference type="Gene3D" id="3.40.1160.10">
    <property type="entry name" value="Acetylglutamate kinase-like"/>
    <property type="match status" value="1"/>
</dbReference>
<dbReference type="Gene3D" id="1.20.120.1320">
    <property type="entry name" value="Aspartokinase, catalytic domain"/>
    <property type="match status" value="1"/>
</dbReference>
<dbReference type="Gene3D" id="3.30.360.10">
    <property type="entry name" value="Dihydrodipicolinate Reductase, domain 2"/>
    <property type="match status" value="1"/>
</dbReference>
<dbReference type="Gene3D" id="3.40.50.720">
    <property type="entry name" value="NAD(P)-binding Rossmann-like Domain"/>
    <property type="match status" value="1"/>
</dbReference>
<dbReference type="Gene3D" id="3.30.2130.10">
    <property type="entry name" value="VC0802-like"/>
    <property type="match status" value="1"/>
</dbReference>
<dbReference type="InterPro" id="IPR036393">
    <property type="entry name" value="AceGlu_kinase-like_sf"/>
</dbReference>
<dbReference type="InterPro" id="IPR045865">
    <property type="entry name" value="ACT-like_dom_sf"/>
</dbReference>
<dbReference type="InterPro" id="IPR054352">
    <property type="entry name" value="ACT_Aspartokinase"/>
</dbReference>
<dbReference type="InterPro" id="IPR002912">
    <property type="entry name" value="ACT_dom"/>
</dbReference>
<dbReference type="InterPro" id="IPR049638">
    <property type="entry name" value="AK-HD"/>
</dbReference>
<dbReference type="InterPro" id="IPR041743">
    <property type="entry name" value="AK-HSDH_N"/>
</dbReference>
<dbReference type="InterPro" id="IPR001048">
    <property type="entry name" value="Asp/Glu/Uridylate_kinase"/>
</dbReference>
<dbReference type="InterPro" id="IPR005106">
    <property type="entry name" value="Asp/hSer_DH_NAD-bd"/>
</dbReference>
<dbReference type="InterPro" id="IPR001341">
    <property type="entry name" value="Asp_kinase"/>
</dbReference>
<dbReference type="InterPro" id="IPR042199">
    <property type="entry name" value="AsparK_Bifunc_asparK/hSer_DH"/>
</dbReference>
<dbReference type="InterPro" id="IPR018042">
    <property type="entry name" value="Aspartate_kinase_CS"/>
</dbReference>
<dbReference type="InterPro" id="IPR011147">
    <property type="entry name" value="Bifunc_Aspkin/hSer_DH"/>
</dbReference>
<dbReference type="InterPro" id="IPR001342">
    <property type="entry name" value="HDH_cat"/>
</dbReference>
<dbReference type="InterPro" id="IPR019811">
    <property type="entry name" value="HDH_CS"/>
</dbReference>
<dbReference type="InterPro" id="IPR036291">
    <property type="entry name" value="NAD(P)-bd_dom_sf"/>
</dbReference>
<dbReference type="NCBIfam" id="TIGR00657">
    <property type="entry name" value="asp_kinases"/>
    <property type="match status" value="1"/>
</dbReference>
<dbReference type="NCBIfam" id="NF006959">
    <property type="entry name" value="PRK09436.1"/>
    <property type="match status" value="1"/>
</dbReference>
<dbReference type="PANTHER" id="PTHR43070">
    <property type="match status" value="1"/>
</dbReference>
<dbReference type="PANTHER" id="PTHR43070:SF3">
    <property type="entry name" value="HOMOSERINE DEHYDROGENASE"/>
    <property type="match status" value="1"/>
</dbReference>
<dbReference type="Pfam" id="PF00696">
    <property type="entry name" value="AA_kinase"/>
    <property type="match status" value="1"/>
</dbReference>
<dbReference type="Pfam" id="PF22468">
    <property type="entry name" value="ACT_9"/>
    <property type="match status" value="2"/>
</dbReference>
<dbReference type="Pfam" id="PF00742">
    <property type="entry name" value="Homoserine_dh"/>
    <property type="match status" value="1"/>
</dbReference>
<dbReference type="Pfam" id="PF03447">
    <property type="entry name" value="NAD_binding_3"/>
    <property type="match status" value="1"/>
</dbReference>
<dbReference type="PIRSF" id="PIRSF000727">
    <property type="entry name" value="ThrA"/>
    <property type="match status" value="1"/>
</dbReference>
<dbReference type="SUPFAM" id="SSF55021">
    <property type="entry name" value="ACT-like"/>
    <property type="match status" value="2"/>
</dbReference>
<dbReference type="SUPFAM" id="SSF53633">
    <property type="entry name" value="Carbamate kinase-like"/>
    <property type="match status" value="1"/>
</dbReference>
<dbReference type="SUPFAM" id="SSF55347">
    <property type="entry name" value="Glyceraldehyde-3-phosphate dehydrogenase-like, C-terminal domain"/>
    <property type="match status" value="1"/>
</dbReference>
<dbReference type="SUPFAM" id="SSF51735">
    <property type="entry name" value="NAD(P)-binding Rossmann-fold domains"/>
    <property type="match status" value="1"/>
</dbReference>
<dbReference type="PROSITE" id="PS51671">
    <property type="entry name" value="ACT"/>
    <property type="match status" value="1"/>
</dbReference>
<dbReference type="PROSITE" id="PS00324">
    <property type="entry name" value="ASPARTOKINASE"/>
    <property type="match status" value="1"/>
</dbReference>
<dbReference type="PROSITE" id="PS01042">
    <property type="entry name" value="HOMOSER_DHGENASE"/>
    <property type="match status" value="1"/>
</dbReference>
<reference key="1">
    <citation type="journal article" date="2000" name="Nature">
        <title>Genome sequence of the endocellular bacterial symbiont of aphids Buchnera sp. APS.</title>
        <authorList>
            <person name="Shigenobu S."/>
            <person name="Watanabe H."/>
            <person name="Hattori M."/>
            <person name="Sakaki Y."/>
            <person name="Ishikawa H."/>
        </authorList>
    </citation>
    <scope>NUCLEOTIDE SEQUENCE [LARGE SCALE GENOMIC DNA]</scope>
    <source>
        <strain>APS</strain>
    </source>
</reference>
<accession>P57290</accession>
<sequence length="816" mass="91809">MKLLKFGGTSLANAEKFLSVSSIIEENTQTDQIAVVLSAPAKITNYLVKIIENTIKNNQILETVHLAENIFMQLINNFLNIQSNFPHKEIEKIIKKEFNELKNIIQGILLLKQCPDNIRAIIISRGEILSVFIMKSILQSKNYNVTIINPVKNLVAIGDNYLDSTVDISESKKNIQNMNINQSNIILMAGFIAGNKDKKLVVLGRNGSDYSAAVLAACLDANCCEIWTDVDGVFTSDPRKVPNARLLKSISYQEAMELSYFGAKVLHPRTIEPIAQFKIPCLIKNTNNVKSIGTLICEQNCSEKDFLKGVTHLDEIAMFNISGPHIKDVGSVISRIFTMMSRGNIKILLITQSSSENKINFCVYEHDIYKILYLFNKEFQLELKDGLLNPFKIKKNLSILSIVGSNIYKKHNIASKIFSVLGALKINVIAISQGSSKHSISLVIKKENILKAVQHVHNTLFFNKKTIHMFLIGIGGIGSTLLNQILKQKQFLDKKNIEIKICAIANSKKILLLDNTNDLSNWKNDFKKSTQKFNLELLNNLIKNNHFSNSVIVDCTSSQLLSEQYVNFIDNNFHVVTSNKKANTSEWNYYKKIRKSVAQTGKKFLYETNVGAGLPVIETLQNLFKSGDNLICFKGILSGSLSFIFGRLEEGILLSQATREAKELGFTEPNPCDDLSGIDVARKLLILARESGYNIELKDIKIEPLLPNNFKIYEDTDKFLLKLKELDVYFSNKIKQALNVGNVLRFVATIEQKRQFFIKLEEVNINNPLYKVKNGENALAFYTNYYQPIPLVLRGYGAGNNVTASGVFSDLLRTLS</sequence>
<comment type="function">
    <text evidence="5">Bifunctional aspartate kinase and homoserine dehydrogenase that catalyzes the first and the third steps toward the synthesis of lysine, methionine and threonine from aspartate.</text>
</comment>
<comment type="catalytic activity">
    <reaction evidence="5">
        <text>L-homoserine + NADP(+) = L-aspartate 4-semialdehyde + NADPH + H(+)</text>
        <dbReference type="Rhea" id="RHEA:15761"/>
        <dbReference type="ChEBI" id="CHEBI:15378"/>
        <dbReference type="ChEBI" id="CHEBI:57476"/>
        <dbReference type="ChEBI" id="CHEBI:57783"/>
        <dbReference type="ChEBI" id="CHEBI:58349"/>
        <dbReference type="ChEBI" id="CHEBI:537519"/>
        <dbReference type="EC" id="1.1.1.3"/>
    </reaction>
    <physiologicalReaction direction="right-to-left" evidence="5">
        <dbReference type="Rhea" id="RHEA:15763"/>
    </physiologicalReaction>
</comment>
<comment type="catalytic activity">
    <reaction evidence="5">
        <text>L-homoserine + NAD(+) = L-aspartate 4-semialdehyde + NADH + H(+)</text>
        <dbReference type="Rhea" id="RHEA:15757"/>
        <dbReference type="ChEBI" id="CHEBI:15378"/>
        <dbReference type="ChEBI" id="CHEBI:57476"/>
        <dbReference type="ChEBI" id="CHEBI:57540"/>
        <dbReference type="ChEBI" id="CHEBI:57945"/>
        <dbReference type="ChEBI" id="CHEBI:537519"/>
        <dbReference type="EC" id="1.1.1.3"/>
    </reaction>
    <physiologicalReaction direction="right-to-left" evidence="5">
        <dbReference type="Rhea" id="RHEA:15759"/>
    </physiologicalReaction>
</comment>
<comment type="catalytic activity">
    <reaction evidence="5">
        <text>L-aspartate + ATP = 4-phospho-L-aspartate + ADP</text>
        <dbReference type="Rhea" id="RHEA:23776"/>
        <dbReference type="ChEBI" id="CHEBI:29991"/>
        <dbReference type="ChEBI" id="CHEBI:30616"/>
        <dbReference type="ChEBI" id="CHEBI:57535"/>
        <dbReference type="ChEBI" id="CHEBI:456216"/>
        <dbReference type="EC" id="2.7.2.4"/>
    </reaction>
    <physiologicalReaction direction="left-to-right" evidence="5">
        <dbReference type="Rhea" id="RHEA:23777"/>
    </physiologicalReaction>
</comment>
<comment type="cofactor">
    <cofactor evidence="4">
        <name>a metal cation</name>
        <dbReference type="ChEBI" id="CHEBI:25213"/>
    </cofactor>
    <text evidence="4">A sodium ion is seen in the structure; a metal ion may subtly affect the relative position of the nucleotide-binding region to influence enzyme activity, and could increase the stability of the enzyme.</text>
</comment>
<comment type="pathway">
    <text evidence="5">Amino-acid biosynthesis; L-lysine biosynthesis via DAP pathway; (S)-tetrahydrodipicolinate from L-aspartate: step 1/4.</text>
</comment>
<comment type="pathway">
    <text evidence="5">Amino-acid biosynthesis; L-methionine biosynthesis via de novo pathway; L-homoserine from L-aspartate: step 1/3.</text>
</comment>
<comment type="pathway">
    <text evidence="5">Amino-acid biosynthesis; L-methionine biosynthesis via de novo pathway; L-homoserine from L-aspartate: step 3/3.</text>
</comment>
<comment type="pathway">
    <text evidence="5">Amino-acid biosynthesis; L-threonine biosynthesis; L-threonine from L-aspartate: step 1/5.</text>
</comment>
<comment type="pathway">
    <text evidence="5">Amino-acid biosynthesis; L-threonine biosynthesis; L-threonine from L-aspartate: step 3/5.</text>
</comment>
<comment type="subunit">
    <text evidence="1">Homotetramer.</text>
</comment>
<comment type="similarity">
    <text evidence="8">In the N-terminal section; belongs to the aspartokinase family.</text>
</comment>
<comment type="similarity">
    <text evidence="8">In the C-terminal section; belongs to the homoserine dehydrogenase family.</text>
</comment>